<protein>
    <recommendedName>
        <fullName evidence="1">Xanthine-guanine phosphoribosyltransferase</fullName>
        <shortName evidence="1">XGPRT</shortName>
        <ecNumber evidence="1">2.4.2.-</ecNumber>
        <ecNumber evidence="1">2.4.2.22</ecNumber>
    </recommendedName>
    <alternativeName>
        <fullName evidence="1">Xanthine phosphoribosyltransferase</fullName>
    </alternativeName>
</protein>
<proteinExistence type="inferred from homology"/>
<accession>Q2NVF2</accession>
<organism>
    <name type="scientific">Sodalis glossinidius (strain morsitans)</name>
    <dbReference type="NCBI Taxonomy" id="343509"/>
    <lineage>
        <taxon>Bacteria</taxon>
        <taxon>Pseudomonadati</taxon>
        <taxon>Pseudomonadota</taxon>
        <taxon>Gammaproteobacteria</taxon>
        <taxon>Enterobacterales</taxon>
        <taxon>Bruguierivoracaceae</taxon>
        <taxon>Sodalis</taxon>
    </lineage>
</organism>
<dbReference type="EC" id="2.4.2.-" evidence="1"/>
<dbReference type="EC" id="2.4.2.22" evidence="1"/>
<dbReference type="EMBL" id="AP008232">
    <property type="protein sequence ID" value="BAE73873.1"/>
    <property type="molecule type" value="Genomic_DNA"/>
</dbReference>
<dbReference type="RefSeq" id="WP_011410351.1">
    <property type="nucleotide sequence ID" value="NC_007712.1"/>
</dbReference>
<dbReference type="SMR" id="Q2NVF2"/>
<dbReference type="STRING" id="343509.SG0598"/>
<dbReference type="KEGG" id="sgl:SG0598"/>
<dbReference type="eggNOG" id="COG2236">
    <property type="taxonomic scope" value="Bacteria"/>
</dbReference>
<dbReference type="HOGENOM" id="CLU_080904_3_0_6"/>
<dbReference type="OrthoDB" id="9789690at2"/>
<dbReference type="BioCyc" id="SGLO343509:SGP1_RS05140-MONOMER"/>
<dbReference type="UniPathway" id="UPA00602">
    <property type="reaction ID" value="UER00658"/>
</dbReference>
<dbReference type="UniPathway" id="UPA00909">
    <property type="reaction ID" value="UER00887"/>
</dbReference>
<dbReference type="Proteomes" id="UP000001932">
    <property type="component" value="Chromosome"/>
</dbReference>
<dbReference type="GO" id="GO:0005829">
    <property type="term" value="C:cytosol"/>
    <property type="evidence" value="ECO:0007669"/>
    <property type="project" value="TreeGrafter"/>
</dbReference>
<dbReference type="GO" id="GO:0005886">
    <property type="term" value="C:plasma membrane"/>
    <property type="evidence" value="ECO:0007669"/>
    <property type="project" value="UniProtKB-SubCell"/>
</dbReference>
<dbReference type="GO" id="GO:0052657">
    <property type="term" value="F:guanine phosphoribosyltransferase activity"/>
    <property type="evidence" value="ECO:0007669"/>
    <property type="project" value="RHEA"/>
</dbReference>
<dbReference type="GO" id="GO:0004422">
    <property type="term" value="F:hypoxanthine phosphoribosyltransferase activity"/>
    <property type="evidence" value="ECO:0007669"/>
    <property type="project" value="TreeGrafter"/>
</dbReference>
<dbReference type="GO" id="GO:0000287">
    <property type="term" value="F:magnesium ion binding"/>
    <property type="evidence" value="ECO:0007669"/>
    <property type="project" value="UniProtKB-UniRule"/>
</dbReference>
<dbReference type="GO" id="GO:0000310">
    <property type="term" value="F:xanthine phosphoribosyltransferase activity"/>
    <property type="evidence" value="ECO:0007669"/>
    <property type="project" value="UniProtKB-UniRule"/>
</dbReference>
<dbReference type="GO" id="GO:0032263">
    <property type="term" value="P:GMP salvage"/>
    <property type="evidence" value="ECO:0007669"/>
    <property type="project" value="UniProtKB-UniRule"/>
</dbReference>
<dbReference type="GO" id="GO:0032264">
    <property type="term" value="P:IMP salvage"/>
    <property type="evidence" value="ECO:0007669"/>
    <property type="project" value="TreeGrafter"/>
</dbReference>
<dbReference type="GO" id="GO:0006166">
    <property type="term" value="P:purine ribonucleoside salvage"/>
    <property type="evidence" value="ECO:0007669"/>
    <property type="project" value="UniProtKB-KW"/>
</dbReference>
<dbReference type="GO" id="GO:0032265">
    <property type="term" value="P:XMP salvage"/>
    <property type="evidence" value="ECO:0007669"/>
    <property type="project" value="UniProtKB-UniRule"/>
</dbReference>
<dbReference type="CDD" id="cd06223">
    <property type="entry name" value="PRTases_typeI"/>
    <property type="match status" value="1"/>
</dbReference>
<dbReference type="FunFam" id="3.40.50.2020:FF:000009">
    <property type="entry name" value="Xanthine phosphoribosyltransferase"/>
    <property type="match status" value="1"/>
</dbReference>
<dbReference type="Gene3D" id="3.40.50.2020">
    <property type="match status" value="1"/>
</dbReference>
<dbReference type="HAMAP" id="MF_01903">
    <property type="entry name" value="XGPRT"/>
    <property type="match status" value="1"/>
</dbReference>
<dbReference type="InterPro" id="IPR000836">
    <property type="entry name" value="PRibTrfase_dom"/>
</dbReference>
<dbReference type="InterPro" id="IPR029057">
    <property type="entry name" value="PRTase-like"/>
</dbReference>
<dbReference type="InterPro" id="IPR023747">
    <property type="entry name" value="Xanthine_Guanine_PRibTrfase"/>
</dbReference>
<dbReference type="NCBIfam" id="NF006613">
    <property type="entry name" value="PRK09177.1"/>
    <property type="match status" value="1"/>
</dbReference>
<dbReference type="PANTHER" id="PTHR39563">
    <property type="entry name" value="XANTHINE PHOSPHORIBOSYLTRANSFERASE"/>
    <property type="match status" value="1"/>
</dbReference>
<dbReference type="PANTHER" id="PTHR39563:SF1">
    <property type="entry name" value="XANTHINE-GUANINE PHOSPHORIBOSYLTRANSFERASE"/>
    <property type="match status" value="1"/>
</dbReference>
<dbReference type="Pfam" id="PF00156">
    <property type="entry name" value="Pribosyltran"/>
    <property type="match status" value="1"/>
</dbReference>
<dbReference type="SUPFAM" id="SSF53271">
    <property type="entry name" value="PRTase-like"/>
    <property type="match status" value="1"/>
</dbReference>
<dbReference type="PROSITE" id="PS00103">
    <property type="entry name" value="PUR_PYR_PR_TRANSFER"/>
    <property type="match status" value="1"/>
</dbReference>
<name>XGPT_SODGM</name>
<comment type="function">
    <text evidence="1">Purine salvage pathway enzyme that catalyzes the transfer of the ribosyl-5-phosphate group from 5-phospho-alpha-D-ribose 1-diphosphate (PRPP) to the N9 position of the 6-oxopurines guanine and xanthine to form the corresponding ribonucleotides GMP (guanosine 5'-monophosphate) and XMP (xanthosine 5'-monophosphate), with the release of PPi. To a lesser extent, also acts on hypoxanthine.</text>
</comment>
<comment type="catalytic activity">
    <reaction evidence="1">
        <text>GMP + diphosphate = guanine + 5-phospho-alpha-D-ribose 1-diphosphate</text>
        <dbReference type="Rhea" id="RHEA:25424"/>
        <dbReference type="ChEBI" id="CHEBI:16235"/>
        <dbReference type="ChEBI" id="CHEBI:33019"/>
        <dbReference type="ChEBI" id="CHEBI:58017"/>
        <dbReference type="ChEBI" id="CHEBI:58115"/>
    </reaction>
    <physiologicalReaction direction="right-to-left" evidence="1">
        <dbReference type="Rhea" id="RHEA:25426"/>
    </physiologicalReaction>
</comment>
<comment type="catalytic activity">
    <reaction evidence="1">
        <text>XMP + diphosphate = xanthine + 5-phospho-alpha-D-ribose 1-diphosphate</text>
        <dbReference type="Rhea" id="RHEA:10800"/>
        <dbReference type="ChEBI" id="CHEBI:17712"/>
        <dbReference type="ChEBI" id="CHEBI:33019"/>
        <dbReference type="ChEBI" id="CHEBI:57464"/>
        <dbReference type="ChEBI" id="CHEBI:58017"/>
        <dbReference type="EC" id="2.4.2.22"/>
    </reaction>
    <physiologicalReaction direction="right-to-left" evidence="1">
        <dbReference type="Rhea" id="RHEA:10802"/>
    </physiologicalReaction>
</comment>
<comment type="catalytic activity">
    <reaction evidence="1">
        <text>IMP + diphosphate = hypoxanthine + 5-phospho-alpha-D-ribose 1-diphosphate</text>
        <dbReference type="Rhea" id="RHEA:17973"/>
        <dbReference type="ChEBI" id="CHEBI:17368"/>
        <dbReference type="ChEBI" id="CHEBI:33019"/>
        <dbReference type="ChEBI" id="CHEBI:58017"/>
        <dbReference type="ChEBI" id="CHEBI:58053"/>
    </reaction>
    <physiologicalReaction direction="right-to-left" evidence="1">
        <dbReference type="Rhea" id="RHEA:17975"/>
    </physiologicalReaction>
</comment>
<comment type="cofactor">
    <cofactor evidence="1">
        <name>Mg(2+)</name>
        <dbReference type="ChEBI" id="CHEBI:18420"/>
    </cofactor>
</comment>
<comment type="pathway">
    <text evidence="1">Purine metabolism; GMP biosynthesis via salvage pathway; GMP from guanine: step 1/1.</text>
</comment>
<comment type="pathway">
    <text evidence="1">Purine metabolism; XMP biosynthesis via salvage pathway; XMP from xanthine: step 1/1.</text>
</comment>
<comment type="subunit">
    <text evidence="1">Homotetramer.</text>
</comment>
<comment type="subcellular location">
    <subcellularLocation>
        <location evidence="1">Cell inner membrane</location>
        <topology evidence="1">Peripheral membrane protein</topology>
    </subcellularLocation>
</comment>
<comment type="similarity">
    <text evidence="1">Belongs to the purine/pyrimidine phosphoribosyltransferase family. XGPT subfamily.</text>
</comment>
<feature type="chain" id="PRO_0000261022" description="Xanthine-guanine phosphoribosyltransferase">
    <location>
        <begin position="1"/>
        <end position="152"/>
    </location>
</feature>
<feature type="binding site" evidence="1">
    <location>
        <begin position="37"/>
        <end position="38"/>
    </location>
    <ligand>
        <name>5-phospho-alpha-D-ribose 1-diphosphate</name>
        <dbReference type="ChEBI" id="CHEBI:58017"/>
    </ligand>
</feature>
<feature type="binding site" evidence="1">
    <location>
        <position position="69"/>
    </location>
    <ligand>
        <name>5-phospho-alpha-D-ribose 1-diphosphate</name>
        <dbReference type="ChEBI" id="CHEBI:58017"/>
    </ligand>
</feature>
<feature type="binding site" evidence="1">
    <location>
        <position position="69"/>
    </location>
    <ligand>
        <name>GMP</name>
        <dbReference type="ChEBI" id="CHEBI:58115"/>
    </ligand>
</feature>
<feature type="binding site" evidence="1">
    <location>
        <begin position="88"/>
        <end position="96"/>
    </location>
    <ligand>
        <name>5-phospho-alpha-D-ribose 1-diphosphate</name>
        <dbReference type="ChEBI" id="CHEBI:58017"/>
    </ligand>
</feature>
<feature type="binding site" evidence="1">
    <location>
        <position position="89"/>
    </location>
    <ligand>
        <name>Mg(2+)</name>
        <dbReference type="ChEBI" id="CHEBI:18420"/>
    </ligand>
</feature>
<feature type="binding site" evidence="1">
    <location>
        <begin position="92"/>
        <end position="96"/>
    </location>
    <ligand>
        <name>GMP</name>
        <dbReference type="ChEBI" id="CHEBI:58115"/>
    </ligand>
</feature>
<feature type="binding site" evidence="1">
    <location>
        <position position="92"/>
    </location>
    <ligand>
        <name>guanine</name>
        <dbReference type="ChEBI" id="CHEBI:16235"/>
    </ligand>
</feature>
<feature type="binding site" evidence="1">
    <location>
        <position position="92"/>
    </location>
    <ligand>
        <name>xanthine</name>
        <dbReference type="ChEBI" id="CHEBI:17712"/>
    </ligand>
</feature>
<feature type="binding site" evidence="1">
    <location>
        <begin position="134"/>
        <end position="135"/>
    </location>
    <ligand>
        <name>GMP</name>
        <dbReference type="ChEBI" id="CHEBI:58115"/>
    </ligand>
</feature>
<feature type="binding site" evidence="1">
    <location>
        <position position="135"/>
    </location>
    <ligand>
        <name>guanine</name>
        <dbReference type="ChEBI" id="CHEBI:16235"/>
    </ligand>
</feature>
<feature type="binding site" evidence="1">
    <location>
        <position position="135"/>
    </location>
    <ligand>
        <name>xanthine</name>
        <dbReference type="ChEBI" id="CHEBI:17712"/>
    </ligand>
</feature>
<keyword id="KW-0997">Cell inner membrane</keyword>
<keyword id="KW-1003">Cell membrane</keyword>
<keyword id="KW-0328">Glycosyltransferase</keyword>
<keyword id="KW-0460">Magnesium</keyword>
<keyword id="KW-0472">Membrane</keyword>
<keyword id="KW-0479">Metal-binding</keyword>
<keyword id="KW-0660">Purine salvage</keyword>
<keyword id="KW-0808">Transferase</keyword>
<evidence type="ECO:0000255" key="1">
    <source>
        <dbReference type="HAMAP-Rule" id="MF_01903"/>
    </source>
</evidence>
<gene>
    <name evidence="1" type="primary">gpt</name>
    <name type="ordered locus">SG0598</name>
</gene>
<sequence length="152" mass="16912">MSEKYVVTWDMLQIHARTMAKLLLPAEQWKGIIAVSRGGLVPGALLARELGIRHVDTVCIASYDHDNQRDLNVLKRAEADGEGFIVVDDLVDTGVTAKAIREMYPKAHFVTIFAKPAGRPLVDDYIIDIPQNTWIEQPWDMGVVFVSPLAGK</sequence>
<reference key="1">
    <citation type="journal article" date="2006" name="Genome Res.">
        <title>Massive genome erosion and functional adaptations provide insights into the symbiotic lifestyle of Sodalis glossinidius in the tsetse host.</title>
        <authorList>
            <person name="Toh H."/>
            <person name="Weiss B.L."/>
            <person name="Perkin S.A.H."/>
            <person name="Yamashita A."/>
            <person name="Oshima K."/>
            <person name="Hattori M."/>
            <person name="Aksoy S."/>
        </authorList>
    </citation>
    <scope>NUCLEOTIDE SEQUENCE [LARGE SCALE GENOMIC DNA]</scope>
    <source>
        <strain>morsitans</strain>
    </source>
</reference>